<keyword id="KW-0456">Lyase</keyword>
<keyword id="KW-0460">Magnesium</keyword>
<keyword id="KW-0479">Metal-binding</keyword>
<keyword id="KW-1185">Reference proteome</keyword>
<dbReference type="EC" id="4.2.1.40"/>
<dbReference type="EMBL" id="AL939113">
    <property type="protein sequence ID" value="CAB66220.1"/>
    <property type="molecule type" value="Genomic_DNA"/>
</dbReference>
<dbReference type="RefSeq" id="NP_626780.1">
    <property type="nucleotide sequence ID" value="NC_003888.3"/>
</dbReference>
<dbReference type="RefSeq" id="WP_011028417.1">
    <property type="nucleotide sequence ID" value="NZ_VNID01000001.1"/>
</dbReference>
<dbReference type="SMR" id="Q9RDE9"/>
<dbReference type="FunCoup" id="Q9RDE9">
    <property type="interactions" value="114"/>
</dbReference>
<dbReference type="STRING" id="100226.gene:17760144"/>
<dbReference type="PaxDb" id="100226-SCO2542"/>
<dbReference type="KEGG" id="sco:SCO2542"/>
<dbReference type="PATRIC" id="fig|100226.15.peg.2587"/>
<dbReference type="eggNOG" id="COG4948">
    <property type="taxonomic scope" value="Bacteria"/>
</dbReference>
<dbReference type="HOGENOM" id="CLU_030273_9_0_11"/>
<dbReference type="InParanoid" id="Q9RDE9"/>
<dbReference type="OrthoDB" id="193563at2"/>
<dbReference type="PhylomeDB" id="Q9RDE9"/>
<dbReference type="UniPathway" id="UPA00564">
    <property type="reaction ID" value="UER00627"/>
</dbReference>
<dbReference type="Proteomes" id="UP000001973">
    <property type="component" value="Chromosome"/>
</dbReference>
<dbReference type="GO" id="GO:0008872">
    <property type="term" value="F:glucarate dehydratase activity"/>
    <property type="evidence" value="ECO:0000318"/>
    <property type="project" value="GO_Central"/>
</dbReference>
<dbReference type="GO" id="GO:0046872">
    <property type="term" value="F:metal ion binding"/>
    <property type="evidence" value="ECO:0007669"/>
    <property type="project" value="UniProtKB-KW"/>
</dbReference>
<dbReference type="GO" id="GO:0042838">
    <property type="term" value="P:D-glucarate catabolic process"/>
    <property type="evidence" value="ECO:0000318"/>
    <property type="project" value="GO_Central"/>
</dbReference>
<dbReference type="CDD" id="cd03323">
    <property type="entry name" value="D-glucarate_dehydratase"/>
    <property type="match status" value="1"/>
</dbReference>
<dbReference type="Gene3D" id="3.20.20.120">
    <property type="entry name" value="Enolase-like C-terminal domain"/>
    <property type="match status" value="1"/>
</dbReference>
<dbReference type="Gene3D" id="3.30.390.10">
    <property type="entry name" value="Enolase-like, N-terminal domain"/>
    <property type="match status" value="1"/>
</dbReference>
<dbReference type="InterPro" id="IPR034593">
    <property type="entry name" value="DgoD-like"/>
</dbReference>
<dbReference type="InterPro" id="IPR036849">
    <property type="entry name" value="Enolase-like_C_sf"/>
</dbReference>
<dbReference type="InterPro" id="IPR029017">
    <property type="entry name" value="Enolase-like_N"/>
</dbReference>
<dbReference type="InterPro" id="IPR029065">
    <property type="entry name" value="Enolase_C-like"/>
</dbReference>
<dbReference type="InterPro" id="IPR034598">
    <property type="entry name" value="GlucD-like"/>
</dbReference>
<dbReference type="InterPro" id="IPR013342">
    <property type="entry name" value="Mandelate_racemase_C"/>
</dbReference>
<dbReference type="InterPro" id="IPR013341">
    <property type="entry name" value="Mandelate_racemase_N_dom"/>
</dbReference>
<dbReference type="PANTHER" id="PTHR48080">
    <property type="entry name" value="D-GALACTONATE DEHYDRATASE-RELATED"/>
    <property type="match status" value="1"/>
</dbReference>
<dbReference type="PANTHER" id="PTHR48080:SF4">
    <property type="entry name" value="GLUCARATE DEHYDRATASE"/>
    <property type="match status" value="1"/>
</dbReference>
<dbReference type="Pfam" id="PF13378">
    <property type="entry name" value="MR_MLE_C"/>
    <property type="match status" value="1"/>
</dbReference>
<dbReference type="Pfam" id="PF02746">
    <property type="entry name" value="MR_MLE_N"/>
    <property type="match status" value="1"/>
</dbReference>
<dbReference type="SFLD" id="SFLDS00001">
    <property type="entry name" value="Enolase"/>
    <property type="match status" value="1"/>
</dbReference>
<dbReference type="SFLD" id="SFLDG00055">
    <property type="entry name" value="glucarate_dehydratase"/>
    <property type="match status" value="1"/>
</dbReference>
<dbReference type="SMART" id="SM00922">
    <property type="entry name" value="MR_MLE"/>
    <property type="match status" value="1"/>
</dbReference>
<dbReference type="SUPFAM" id="SSF51604">
    <property type="entry name" value="Enolase C-terminal domain-like"/>
    <property type="match status" value="1"/>
</dbReference>
<dbReference type="SUPFAM" id="SSF54826">
    <property type="entry name" value="Enolase N-terminal domain-like"/>
    <property type="match status" value="1"/>
</dbReference>
<proteinExistence type="inferred from homology"/>
<reference key="1">
    <citation type="journal article" date="2002" name="Nature">
        <title>Complete genome sequence of the model actinomycete Streptomyces coelicolor A3(2).</title>
        <authorList>
            <person name="Bentley S.D."/>
            <person name="Chater K.F."/>
            <person name="Cerdeno-Tarraga A.-M."/>
            <person name="Challis G.L."/>
            <person name="Thomson N.R."/>
            <person name="James K.D."/>
            <person name="Harris D.E."/>
            <person name="Quail M.A."/>
            <person name="Kieser H."/>
            <person name="Harper D."/>
            <person name="Bateman A."/>
            <person name="Brown S."/>
            <person name="Chandra G."/>
            <person name="Chen C.W."/>
            <person name="Collins M."/>
            <person name="Cronin A."/>
            <person name="Fraser A."/>
            <person name="Goble A."/>
            <person name="Hidalgo J."/>
            <person name="Hornsby T."/>
            <person name="Howarth S."/>
            <person name="Huang C.-H."/>
            <person name="Kieser T."/>
            <person name="Larke L."/>
            <person name="Murphy L.D."/>
            <person name="Oliver K."/>
            <person name="O'Neil S."/>
            <person name="Rabbinowitsch E."/>
            <person name="Rajandream M.A."/>
            <person name="Rutherford K.M."/>
            <person name="Rutter S."/>
            <person name="Seeger K."/>
            <person name="Saunders D."/>
            <person name="Sharp S."/>
            <person name="Squares R."/>
            <person name="Squares S."/>
            <person name="Taylor K."/>
            <person name="Warren T."/>
            <person name="Wietzorrek A."/>
            <person name="Woodward J.R."/>
            <person name="Barrell B.G."/>
            <person name="Parkhill J."/>
            <person name="Hopwood D.A."/>
        </authorList>
    </citation>
    <scope>NUCLEOTIDE SEQUENCE [LARGE SCALE GENOMIC DNA]</scope>
    <source>
        <strain>ATCC BAA-471 / A3(2) / M145</strain>
    </source>
</reference>
<organism>
    <name type="scientific">Streptomyces coelicolor (strain ATCC BAA-471 / A3(2) / M145)</name>
    <dbReference type="NCBI Taxonomy" id="100226"/>
    <lineage>
        <taxon>Bacteria</taxon>
        <taxon>Bacillati</taxon>
        <taxon>Actinomycetota</taxon>
        <taxon>Actinomycetes</taxon>
        <taxon>Kitasatosporales</taxon>
        <taxon>Streptomycetaceae</taxon>
        <taxon>Streptomyces</taxon>
        <taxon>Streptomyces albidoflavus group</taxon>
    </lineage>
</organism>
<sequence length="431" mass="46196">MTRDLTITAVHLTPILVADPPLLNTQGVHQPYTPRLIVEVETADGVTGVGETYGDAKYLELARPFAAKLVGRQVSDLNGLFTLADEVAVDSSRVFGQVDVGGLRGVQTADKLRLSVVSGFEVACLDALGKALGLPVHALLGGKVRDAVEYSAYLFYKWADHPEGVASEKDDWGAAVDPAGVVAQARAFTERYGFTSFKLKGGVFPPEEEIAAVKALAEAFPGHPLRLDPNGAWSVETSLKVAAELGDVLEYLEDPALGTPAMAEVAAKTGVPLATNMCVTTFAEIQEAFTKGAVQVVLSDHHYWGGLRNTQQLAAVCRTFGVGVSMHSNTHLGISLAAMTHVAATVPDLHHACDSHYPWQSEDVLTERLAFDGGKVAVSDAPGLGVALDRERLAFLHRRWLDDDGTLRDRDDAAAMRVADPEWVTPSVPRW</sequence>
<comment type="function">
    <text evidence="1">Catalyzes the dehydration of glucarate to 5-keto-4-deoxy-D-glucarate (5-kdGluc).</text>
</comment>
<comment type="catalytic activity">
    <reaction>
        <text>D-glucarate = 5-dehydro-4-deoxy-D-glucarate + H2O</text>
        <dbReference type="Rhea" id="RHEA:14573"/>
        <dbReference type="ChEBI" id="CHEBI:15377"/>
        <dbReference type="ChEBI" id="CHEBI:30612"/>
        <dbReference type="ChEBI" id="CHEBI:42819"/>
        <dbReference type="EC" id="4.2.1.40"/>
    </reaction>
</comment>
<comment type="cofactor">
    <cofactor evidence="1">
        <name>Mg(2+)</name>
        <dbReference type="ChEBI" id="CHEBI:18420"/>
    </cofactor>
</comment>
<comment type="pathway">
    <text>Carbohydrate acid metabolism; D-glucarate degradation; 2,5-dioxopentanoate from D-glucarate: step 1/2.</text>
</comment>
<comment type="similarity">
    <text evidence="2">Belongs to the mandelate racemase/muconate lactonizing enzyme family. GlucD subfamily.</text>
</comment>
<name>GUDD_STRCO</name>
<gene>
    <name type="primary">gudD</name>
    <name type="ordered locus">SCO2542</name>
    <name type="ORF">SCC77.09c</name>
</gene>
<evidence type="ECO:0000250" key="1"/>
<evidence type="ECO:0000305" key="2"/>
<feature type="chain" id="PRO_0000171269" description="Probable glucarate dehydratase">
    <location>
        <begin position="1"/>
        <end position="431"/>
    </location>
</feature>
<feature type="active site" description="Proton acceptor" evidence="1">
    <location>
        <position position="200"/>
    </location>
</feature>
<feature type="active site" description="Proton acceptor" evidence="1">
    <location>
        <position position="327"/>
    </location>
</feature>
<feature type="binding site" evidence="1">
    <location>
        <position position="29"/>
    </location>
    <ligand>
        <name>substrate</name>
    </ligand>
</feature>
<feature type="binding site" evidence="1">
    <location>
        <position position="108"/>
    </location>
    <ligand>
        <name>substrate</name>
    </ligand>
</feature>
<feature type="binding site" evidence="1">
    <location>
        <position position="153"/>
    </location>
    <ligand>
        <name>substrate</name>
    </ligand>
</feature>
<feature type="binding site" evidence="1">
    <location>
        <position position="198"/>
    </location>
    <ligand>
        <name>substrate</name>
    </ligand>
</feature>
<feature type="binding site" evidence="1">
    <location>
        <begin position="228"/>
        <end position="230"/>
    </location>
    <ligand>
        <name>substrate</name>
    </ligand>
</feature>
<feature type="binding site" evidence="1">
    <location>
        <position position="228"/>
    </location>
    <ligand>
        <name>Mg(2+)</name>
        <dbReference type="ChEBI" id="CHEBI:18420"/>
    </ligand>
</feature>
<feature type="binding site" evidence="1">
    <location>
        <position position="276"/>
    </location>
    <ligand>
        <name>Mg(2+)</name>
        <dbReference type="ChEBI" id="CHEBI:18420"/>
    </ligand>
</feature>
<feature type="binding site" evidence="1">
    <location>
        <position position="276"/>
    </location>
    <ligand>
        <name>substrate</name>
    </ligand>
</feature>
<feature type="binding site" evidence="1">
    <location>
        <begin position="327"/>
        <end position="329"/>
    </location>
    <ligand>
        <name>substrate</name>
    </ligand>
</feature>
<feature type="binding site" evidence="1">
    <location>
        <position position="356"/>
    </location>
    <ligand>
        <name>substrate</name>
    </ligand>
</feature>
<feature type="binding site" evidence="1">
    <location>
        <position position="410"/>
    </location>
    <ligand>
        <name>substrate</name>
    </ligand>
</feature>
<protein>
    <recommendedName>
        <fullName>Probable glucarate dehydratase</fullName>
        <shortName>GDH</shortName>
        <shortName>GlucD</shortName>
        <ecNumber>4.2.1.40</ecNumber>
    </recommendedName>
</protein>
<accession>Q9RDE9</accession>